<reference key="1">
    <citation type="submission" date="2006-12" db="EMBL/GenBank/DDBJ databases">
        <title>Complete sequence of Halorhodospira halophila SL1.</title>
        <authorList>
            <consortium name="US DOE Joint Genome Institute"/>
            <person name="Copeland A."/>
            <person name="Lucas S."/>
            <person name="Lapidus A."/>
            <person name="Barry K."/>
            <person name="Detter J.C."/>
            <person name="Glavina del Rio T."/>
            <person name="Hammon N."/>
            <person name="Israni S."/>
            <person name="Dalin E."/>
            <person name="Tice H."/>
            <person name="Pitluck S."/>
            <person name="Saunders E."/>
            <person name="Brettin T."/>
            <person name="Bruce D."/>
            <person name="Han C."/>
            <person name="Tapia R."/>
            <person name="Schmutz J."/>
            <person name="Larimer F."/>
            <person name="Land M."/>
            <person name="Hauser L."/>
            <person name="Kyrpides N."/>
            <person name="Mikhailova N."/>
            <person name="Hoff W."/>
            <person name="Richardson P."/>
        </authorList>
    </citation>
    <scope>NUCLEOTIDE SEQUENCE [LARGE SCALE GENOMIC DNA]</scope>
    <source>
        <strain>DSM 244 / SL1</strain>
    </source>
</reference>
<sequence length="868" mass="94681">MAATQEAETATNGAGHTPMMRQFLRIKAEYPETLLFYRMGDFYELFYEDAERAAKLLDITLTTRGESAGAPIPMAGVPVQSVESYLARLVRLGESVAICEQIGDPNTTKGPVERQVVRVVTPGTLTEDALLEERSANLLTAVAPGPKGRFGVASLELSSGRFSVLEAPDQEALTAELERLRPAELILPDDDQTPAPEGGCVAQRRPSWHFEYDSARRLLLRQLGTHDLSGFGAEELHAPVTAAGALLQYLNETQRAALPHVGALTVESRDEAITIDAASRRNLEIEHNLSGGTEHTLASVIDTSVTAMGGRLLRRWLQRPLRRRETIAARHAAVAALADGAFADVRSTLEGCADVERILARVALGTARPRDLTGLRDALERLPQLQILLGQLNSHRLQALGVELDEHPQTVDLLQRAIIDTPPATVRDGGVIADGFDGELDELRSMSRNADDYLAALEAEERAATGIPTLKVGFNRVHGYYIEVSRSQSGHMPERYTRRQTLKAAERFITPELKRFEEQVLSARERALAREKALYEQLVADLASELTPLQRSASALAELDALAAFAERARSLDYVQPELADTPGVRIEGGRHPVVEQALDAPFVPNDVRLDNRRRMLLITGPNMGGKSTYMRQTALIALLAYAGAFVPAQRAVLGPIDRIFTRIGAADDLASGRSTFMVEMTETANILHNATAESLVLMDEIGRGTSTFDGLALAWATAERLATRIRAFTLFATHYFEMTALEQIHPGVVNVHLEAAEHGERIVFLHAVRDGPANQSYGLQVAALAGVPQEVLKAAREKLRSLESGDGGDTGSAQLPLFGPEPVFPPPAQPEPEPDPIREAVENLDPDGLTPRDALETIYWLKAQCKE</sequence>
<evidence type="ECO:0000255" key="1">
    <source>
        <dbReference type="HAMAP-Rule" id="MF_00096"/>
    </source>
</evidence>
<evidence type="ECO:0000256" key="2">
    <source>
        <dbReference type="SAM" id="MobiDB-lite"/>
    </source>
</evidence>
<proteinExistence type="inferred from homology"/>
<dbReference type="EMBL" id="CP000544">
    <property type="protein sequence ID" value="ABM62421.1"/>
    <property type="molecule type" value="Genomic_DNA"/>
</dbReference>
<dbReference type="RefSeq" id="WP_011814443.1">
    <property type="nucleotide sequence ID" value="NC_008789.1"/>
</dbReference>
<dbReference type="SMR" id="A1WXK9"/>
<dbReference type="STRING" id="349124.Hhal_1657"/>
<dbReference type="KEGG" id="hha:Hhal_1657"/>
<dbReference type="eggNOG" id="COG0249">
    <property type="taxonomic scope" value="Bacteria"/>
</dbReference>
<dbReference type="HOGENOM" id="CLU_002472_4_0_6"/>
<dbReference type="OrthoDB" id="9802448at2"/>
<dbReference type="Proteomes" id="UP000000647">
    <property type="component" value="Chromosome"/>
</dbReference>
<dbReference type="GO" id="GO:0005829">
    <property type="term" value="C:cytosol"/>
    <property type="evidence" value="ECO:0007669"/>
    <property type="project" value="TreeGrafter"/>
</dbReference>
<dbReference type="GO" id="GO:0005524">
    <property type="term" value="F:ATP binding"/>
    <property type="evidence" value="ECO:0007669"/>
    <property type="project" value="UniProtKB-UniRule"/>
</dbReference>
<dbReference type="GO" id="GO:0140664">
    <property type="term" value="F:ATP-dependent DNA damage sensor activity"/>
    <property type="evidence" value="ECO:0007669"/>
    <property type="project" value="InterPro"/>
</dbReference>
<dbReference type="GO" id="GO:0003684">
    <property type="term" value="F:damaged DNA binding"/>
    <property type="evidence" value="ECO:0007669"/>
    <property type="project" value="UniProtKB-UniRule"/>
</dbReference>
<dbReference type="GO" id="GO:0030983">
    <property type="term" value="F:mismatched DNA binding"/>
    <property type="evidence" value="ECO:0007669"/>
    <property type="project" value="InterPro"/>
</dbReference>
<dbReference type="GO" id="GO:0006298">
    <property type="term" value="P:mismatch repair"/>
    <property type="evidence" value="ECO:0007669"/>
    <property type="project" value="UniProtKB-UniRule"/>
</dbReference>
<dbReference type="CDD" id="cd03284">
    <property type="entry name" value="ABC_MutS1"/>
    <property type="match status" value="1"/>
</dbReference>
<dbReference type="FunFam" id="1.10.1420.10:FF:000002">
    <property type="entry name" value="DNA mismatch repair protein MutS"/>
    <property type="match status" value="1"/>
</dbReference>
<dbReference type="FunFam" id="3.40.1170.10:FF:000001">
    <property type="entry name" value="DNA mismatch repair protein MutS"/>
    <property type="match status" value="1"/>
</dbReference>
<dbReference type="FunFam" id="3.40.50.300:FF:000283">
    <property type="entry name" value="DNA mismatch repair protein MutS"/>
    <property type="match status" value="1"/>
</dbReference>
<dbReference type="Gene3D" id="1.10.1420.10">
    <property type="match status" value="2"/>
</dbReference>
<dbReference type="Gene3D" id="6.10.140.430">
    <property type="match status" value="1"/>
</dbReference>
<dbReference type="Gene3D" id="3.40.1170.10">
    <property type="entry name" value="DNA repair protein MutS, domain I"/>
    <property type="match status" value="1"/>
</dbReference>
<dbReference type="Gene3D" id="3.30.420.110">
    <property type="entry name" value="MutS, connector domain"/>
    <property type="match status" value="1"/>
</dbReference>
<dbReference type="Gene3D" id="3.40.50.300">
    <property type="entry name" value="P-loop containing nucleotide triphosphate hydrolases"/>
    <property type="match status" value="1"/>
</dbReference>
<dbReference type="HAMAP" id="MF_00096">
    <property type="entry name" value="MutS"/>
    <property type="match status" value="1"/>
</dbReference>
<dbReference type="InterPro" id="IPR005748">
    <property type="entry name" value="DNA_mismatch_repair_MutS"/>
</dbReference>
<dbReference type="InterPro" id="IPR007695">
    <property type="entry name" value="DNA_mismatch_repair_MutS-lik_N"/>
</dbReference>
<dbReference type="InterPro" id="IPR017261">
    <property type="entry name" value="DNA_mismatch_repair_MutS/MSH"/>
</dbReference>
<dbReference type="InterPro" id="IPR000432">
    <property type="entry name" value="DNA_mismatch_repair_MutS_C"/>
</dbReference>
<dbReference type="InterPro" id="IPR007861">
    <property type="entry name" value="DNA_mismatch_repair_MutS_clamp"/>
</dbReference>
<dbReference type="InterPro" id="IPR007696">
    <property type="entry name" value="DNA_mismatch_repair_MutS_core"/>
</dbReference>
<dbReference type="InterPro" id="IPR016151">
    <property type="entry name" value="DNA_mismatch_repair_MutS_N"/>
</dbReference>
<dbReference type="InterPro" id="IPR036187">
    <property type="entry name" value="DNA_mismatch_repair_MutS_sf"/>
</dbReference>
<dbReference type="InterPro" id="IPR007860">
    <property type="entry name" value="DNA_mmatch_repair_MutS_con_dom"/>
</dbReference>
<dbReference type="InterPro" id="IPR045076">
    <property type="entry name" value="MutS"/>
</dbReference>
<dbReference type="InterPro" id="IPR036678">
    <property type="entry name" value="MutS_con_dom_sf"/>
</dbReference>
<dbReference type="InterPro" id="IPR027417">
    <property type="entry name" value="P-loop_NTPase"/>
</dbReference>
<dbReference type="NCBIfam" id="TIGR01070">
    <property type="entry name" value="mutS1"/>
    <property type="match status" value="1"/>
</dbReference>
<dbReference type="NCBIfam" id="NF003810">
    <property type="entry name" value="PRK05399.1"/>
    <property type="match status" value="1"/>
</dbReference>
<dbReference type="PANTHER" id="PTHR11361:SF34">
    <property type="entry name" value="DNA MISMATCH REPAIR PROTEIN MSH1, MITOCHONDRIAL"/>
    <property type="match status" value="1"/>
</dbReference>
<dbReference type="PANTHER" id="PTHR11361">
    <property type="entry name" value="DNA MISMATCH REPAIR PROTEIN MUTS FAMILY MEMBER"/>
    <property type="match status" value="1"/>
</dbReference>
<dbReference type="Pfam" id="PF01624">
    <property type="entry name" value="MutS_I"/>
    <property type="match status" value="1"/>
</dbReference>
<dbReference type="Pfam" id="PF05188">
    <property type="entry name" value="MutS_II"/>
    <property type="match status" value="1"/>
</dbReference>
<dbReference type="Pfam" id="PF05192">
    <property type="entry name" value="MutS_III"/>
    <property type="match status" value="1"/>
</dbReference>
<dbReference type="Pfam" id="PF05190">
    <property type="entry name" value="MutS_IV"/>
    <property type="match status" value="1"/>
</dbReference>
<dbReference type="Pfam" id="PF00488">
    <property type="entry name" value="MutS_V"/>
    <property type="match status" value="1"/>
</dbReference>
<dbReference type="PIRSF" id="PIRSF037677">
    <property type="entry name" value="DNA_mis_repair_Msh6"/>
    <property type="match status" value="1"/>
</dbReference>
<dbReference type="SMART" id="SM00534">
    <property type="entry name" value="MUTSac"/>
    <property type="match status" value="1"/>
</dbReference>
<dbReference type="SMART" id="SM00533">
    <property type="entry name" value="MUTSd"/>
    <property type="match status" value="1"/>
</dbReference>
<dbReference type="SUPFAM" id="SSF55271">
    <property type="entry name" value="DNA repair protein MutS, domain I"/>
    <property type="match status" value="1"/>
</dbReference>
<dbReference type="SUPFAM" id="SSF53150">
    <property type="entry name" value="DNA repair protein MutS, domain II"/>
    <property type="match status" value="1"/>
</dbReference>
<dbReference type="SUPFAM" id="SSF48334">
    <property type="entry name" value="DNA repair protein MutS, domain III"/>
    <property type="match status" value="1"/>
</dbReference>
<dbReference type="SUPFAM" id="SSF52540">
    <property type="entry name" value="P-loop containing nucleoside triphosphate hydrolases"/>
    <property type="match status" value="1"/>
</dbReference>
<dbReference type="PROSITE" id="PS00486">
    <property type="entry name" value="DNA_MISMATCH_REPAIR_2"/>
    <property type="match status" value="1"/>
</dbReference>
<organism>
    <name type="scientific">Halorhodospira halophila (strain DSM 244 / SL1)</name>
    <name type="common">Ectothiorhodospira halophila (strain DSM 244 / SL1)</name>
    <dbReference type="NCBI Taxonomy" id="349124"/>
    <lineage>
        <taxon>Bacteria</taxon>
        <taxon>Pseudomonadati</taxon>
        <taxon>Pseudomonadota</taxon>
        <taxon>Gammaproteobacteria</taxon>
        <taxon>Chromatiales</taxon>
        <taxon>Ectothiorhodospiraceae</taxon>
        <taxon>Halorhodospira</taxon>
    </lineage>
</organism>
<feature type="chain" id="PRO_0000335166" description="DNA mismatch repair protein MutS">
    <location>
        <begin position="1"/>
        <end position="868"/>
    </location>
</feature>
<feature type="region of interest" description="Disordered" evidence="2">
    <location>
        <begin position="803"/>
        <end position="852"/>
    </location>
</feature>
<feature type="compositionally biased region" description="Pro residues" evidence="2">
    <location>
        <begin position="823"/>
        <end position="832"/>
    </location>
</feature>
<feature type="binding site" evidence="1">
    <location>
        <begin position="621"/>
        <end position="628"/>
    </location>
    <ligand>
        <name>ATP</name>
        <dbReference type="ChEBI" id="CHEBI:30616"/>
    </ligand>
</feature>
<keyword id="KW-0067">ATP-binding</keyword>
<keyword id="KW-0227">DNA damage</keyword>
<keyword id="KW-0234">DNA repair</keyword>
<keyword id="KW-0238">DNA-binding</keyword>
<keyword id="KW-0547">Nucleotide-binding</keyword>
<keyword id="KW-1185">Reference proteome</keyword>
<comment type="function">
    <text evidence="1">This protein is involved in the repair of mismatches in DNA. It is possible that it carries out the mismatch recognition step. This protein has a weak ATPase activity.</text>
</comment>
<comment type="similarity">
    <text evidence="1">Belongs to the DNA mismatch repair MutS family.</text>
</comment>
<accession>A1WXK9</accession>
<name>MUTS_HALHL</name>
<gene>
    <name evidence="1" type="primary">mutS</name>
    <name type="ordered locus">Hhal_1657</name>
</gene>
<protein>
    <recommendedName>
        <fullName evidence="1">DNA mismatch repair protein MutS</fullName>
    </recommendedName>
</protein>